<reference evidence="5" key="1">
    <citation type="journal article" date="2012" name="Syst. Biol.">
        <title>Peptidomics-based phylogeny and biogeography of Mantophasmatodea (Hexapoda).</title>
        <authorList>
            <person name="Predel R."/>
            <person name="Neupert S."/>
            <person name="Huetteroth W."/>
            <person name="Kahnt J."/>
            <person name="Waidelich D."/>
            <person name="Roth S."/>
        </authorList>
    </citation>
    <scope>PROTEIN SEQUENCE</scope>
    <scope>AMIDATION AT LEU-11</scope>
    <source>
        <tissue evidence="3">Abdominal perisympathetic organs</tissue>
    </source>
</reference>
<sequence length="11" mass="1183">EAAGLLPFPRL</sequence>
<dbReference type="GO" id="GO:0005576">
    <property type="term" value="C:extracellular region"/>
    <property type="evidence" value="ECO:0007669"/>
    <property type="project" value="UniProtKB-SubCell"/>
</dbReference>
<dbReference type="GO" id="GO:0007218">
    <property type="term" value="P:neuropeptide signaling pathway"/>
    <property type="evidence" value="ECO:0007669"/>
    <property type="project" value="UniProtKB-KW"/>
</dbReference>
<protein>
    <recommendedName>
        <fullName evidence="4">CAPA-Periviscerokinin-1</fullName>
        <shortName evidence="4">CAPA-PVK-1</shortName>
    </recommendedName>
</protein>
<name>PVK1_AUSGA</name>
<evidence type="ECO:0000250" key="1">
    <source>
        <dbReference type="UniProtKB" id="P83923"/>
    </source>
</evidence>
<evidence type="ECO:0000255" key="2"/>
<evidence type="ECO:0000269" key="3">
    <source>
    </source>
</evidence>
<evidence type="ECO:0000303" key="4">
    <source>
    </source>
</evidence>
<evidence type="ECO:0000305" key="5"/>
<evidence type="ECO:0000305" key="6">
    <source>
    </source>
</evidence>
<proteinExistence type="evidence at protein level"/>
<comment type="function">
    <text evidence="1">Mediates visceral muscle contractile activity (myotropic activity).</text>
</comment>
<comment type="subcellular location">
    <subcellularLocation>
        <location evidence="6">Secreted</location>
    </subcellularLocation>
</comment>
<comment type="similarity">
    <text evidence="2">Belongs to the periviscerokinin family.</text>
</comment>
<keyword id="KW-0027">Amidation</keyword>
<keyword id="KW-0903">Direct protein sequencing</keyword>
<keyword id="KW-0527">Neuropeptide</keyword>
<keyword id="KW-0964">Secreted</keyword>
<organism>
    <name type="scientific">Austrophasma gansbaaiense</name>
    <name type="common">Gladiator</name>
    <name type="synonym">Heel-walker</name>
    <dbReference type="NCBI Taxonomy" id="253136"/>
    <lineage>
        <taxon>Eukaryota</taxon>
        <taxon>Metazoa</taxon>
        <taxon>Ecdysozoa</taxon>
        <taxon>Arthropoda</taxon>
        <taxon>Hexapoda</taxon>
        <taxon>Insecta</taxon>
        <taxon>Pterygota</taxon>
        <taxon>Neoptera</taxon>
        <taxon>Polyneoptera</taxon>
        <taxon>Mantophasmatodea</taxon>
        <taxon>Austrophasmatidae</taxon>
        <taxon>Austrophasma</taxon>
    </lineage>
</organism>
<accession>B3A0D6</accession>
<feature type="peptide" id="PRO_0000421633" description="CAPA-Periviscerokinin-1" evidence="3">
    <location>
        <begin position="1"/>
        <end position="11"/>
    </location>
</feature>
<feature type="modified residue" description="Leucine amide" evidence="3">
    <location>
        <position position="11"/>
    </location>
</feature>